<sequence>MAATTTILSSAAPTPLTAPPRARARAPAARRRRLRARDILGAALGLANGGASAALAAPLSYEETLRLSTDSGGGGGGGGEFALPDLGLGGVLDFVAQNPLVAAAGVAAVALPLVLAQVLGGASKPYGVVSAAAAYRALVEEPGAQLVDIRPPGDARQSGAPDLREAKKKAAAVPYDGEDKNGFLKKLSLRFKDPENTTLVILDKFDGNSELVAELVTANGYKAAFAVKDGAEGRRGWLSSSLPWTAPKKGFSLSDLIGDGTDGLPVTLGLAAATGLGILAYTEIETVLQFLGSAAIVQLVASKLIYAEDRKRTLKQIDDFFNKKVAPKELVDEIKEISQALLPSTGTKSQPAITEAAPATAEAAPAAATATAAPPAAPVEETSTEAAPAEPTPLSPYTNYPDLKPPSSPSPLAPAEATKNESESESAATESAPAVNSAPVAEAAPEAAPPAAPRPLSPYPNYPDLKPPSSPSPSAP</sequence>
<gene>
    <name evidence="6" type="primary">TROL</name>
    <name evidence="7" type="ORF">OsI_06628</name>
</gene>
<comment type="function">
    <text evidence="2">Rhodanese domain-containing protein required for anchoring ferredoxin--NADP reductase to the thylakoid membranes and sustaining efficient linear electron flow (LEF).</text>
</comment>
<comment type="subunit">
    <text evidence="1">Component of high molecular weight thylakoid LFNRs-containing protein complexes containing LIR1, LFNR1, LFNR2, TIC62 and TROL proteins.</text>
</comment>
<comment type="subcellular location">
    <subcellularLocation>
        <location evidence="2">Plastid</location>
        <location evidence="2">Chloroplast thylakoid membrane</location>
        <topology evidence="3">Multi-pass membrane protein</topology>
    </subcellularLocation>
    <text evidence="2">Mainly localized to the non-appressed regions of the thylakoid membrane.</text>
</comment>
<organism>
    <name type="scientific">Oryza sativa subsp. indica</name>
    <name type="common">Rice</name>
    <dbReference type="NCBI Taxonomy" id="39946"/>
    <lineage>
        <taxon>Eukaryota</taxon>
        <taxon>Viridiplantae</taxon>
        <taxon>Streptophyta</taxon>
        <taxon>Embryophyta</taxon>
        <taxon>Tracheophyta</taxon>
        <taxon>Spermatophyta</taxon>
        <taxon>Magnoliopsida</taxon>
        <taxon>Liliopsida</taxon>
        <taxon>Poales</taxon>
        <taxon>Poaceae</taxon>
        <taxon>BOP clade</taxon>
        <taxon>Oryzoideae</taxon>
        <taxon>Oryzeae</taxon>
        <taxon>Oryzinae</taxon>
        <taxon>Oryza</taxon>
        <taxon>Oryza sativa</taxon>
    </lineage>
</organism>
<evidence type="ECO:0000250" key="1">
    <source>
        <dbReference type="UniProtKB" id="Q6ETQ7"/>
    </source>
</evidence>
<evidence type="ECO:0000250" key="2">
    <source>
        <dbReference type="UniProtKB" id="Q9M158"/>
    </source>
</evidence>
<evidence type="ECO:0000255" key="3"/>
<evidence type="ECO:0000255" key="4">
    <source>
        <dbReference type="PROSITE-ProRule" id="PRU00173"/>
    </source>
</evidence>
<evidence type="ECO:0000256" key="5">
    <source>
        <dbReference type="SAM" id="MobiDB-lite"/>
    </source>
</evidence>
<evidence type="ECO:0000305" key="6"/>
<evidence type="ECO:0000312" key="7">
    <source>
        <dbReference type="EMBL" id="EAY85255.1"/>
    </source>
</evidence>
<accession>A2X345</accession>
<dbReference type="EMBL" id="CM000127">
    <property type="protein sequence ID" value="EAY85255.1"/>
    <property type="molecule type" value="Genomic_DNA"/>
</dbReference>
<dbReference type="SMR" id="A2X345"/>
<dbReference type="STRING" id="39946.A2X345"/>
<dbReference type="EnsemblPlants" id="BGIOSGA007908-TA">
    <property type="protein sequence ID" value="BGIOSGA007908-PA"/>
    <property type="gene ID" value="BGIOSGA007908"/>
</dbReference>
<dbReference type="EnsemblPlants" id="OsIR64_02g0010840.01">
    <property type="protein sequence ID" value="OsIR64_02g0010840.01"/>
    <property type="gene ID" value="OsIR64_02g0010840"/>
</dbReference>
<dbReference type="EnsemblPlants" id="OsLiXu_02g0011260.01">
    <property type="protein sequence ID" value="OsLiXu_02g0011260.01"/>
    <property type="gene ID" value="OsLiXu_02g0011260"/>
</dbReference>
<dbReference type="Gramene" id="BGIOSGA007908-TA">
    <property type="protein sequence ID" value="BGIOSGA007908-PA"/>
    <property type="gene ID" value="BGIOSGA007908"/>
</dbReference>
<dbReference type="Gramene" id="OsIR64_02g0010840.01">
    <property type="protein sequence ID" value="OsIR64_02g0010840.01"/>
    <property type="gene ID" value="OsIR64_02g0010840"/>
</dbReference>
<dbReference type="Gramene" id="OsLiXu_02g0011260.01">
    <property type="protein sequence ID" value="OsLiXu_02g0011260.01"/>
    <property type="gene ID" value="OsLiXu_02g0011260"/>
</dbReference>
<dbReference type="HOGENOM" id="CLU_023830_2_0_1"/>
<dbReference type="OMA" id="KPPKSWG"/>
<dbReference type="Proteomes" id="UP000007015">
    <property type="component" value="Chromosome 2"/>
</dbReference>
<dbReference type="GO" id="GO:0098807">
    <property type="term" value="C:chloroplast thylakoid membrane protein complex"/>
    <property type="evidence" value="ECO:0000250"/>
    <property type="project" value="UniProtKB"/>
</dbReference>
<dbReference type="CDD" id="cd00158">
    <property type="entry name" value="RHOD"/>
    <property type="match status" value="1"/>
</dbReference>
<dbReference type="FunFam" id="3.40.250.10:FF:000044">
    <property type="entry name" value="Rhodanese-like domain-containing protein 4, chloroplastic"/>
    <property type="match status" value="1"/>
</dbReference>
<dbReference type="Gene3D" id="3.40.250.10">
    <property type="entry name" value="Rhodanese-like domain"/>
    <property type="match status" value="1"/>
</dbReference>
<dbReference type="InterPro" id="IPR001763">
    <property type="entry name" value="Rhodanese-like_dom"/>
</dbReference>
<dbReference type="InterPro" id="IPR036873">
    <property type="entry name" value="Rhodanese-like_dom_sf"/>
</dbReference>
<dbReference type="InterPro" id="IPR044240">
    <property type="entry name" value="STR4-like"/>
</dbReference>
<dbReference type="PANTHER" id="PTHR47377">
    <property type="entry name" value="RHODANESE-LIKE DOMAIN-CONTAINING PROTEIN 4, CHLOROPLASTIC"/>
    <property type="match status" value="1"/>
</dbReference>
<dbReference type="PANTHER" id="PTHR47377:SF1">
    <property type="entry name" value="RHODANESE-LIKE DOMAIN-CONTAINING PROTEIN 4, CHLOROPLASTIC"/>
    <property type="match status" value="1"/>
</dbReference>
<dbReference type="SUPFAM" id="SSF52821">
    <property type="entry name" value="Rhodanese/Cell cycle control phosphatase"/>
    <property type="match status" value="1"/>
</dbReference>
<dbReference type="PROSITE" id="PS50206">
    <property type="entry name" value="RHODANESE_3"/>
    <property type="match status" value="1"/>
</dbReference>
<protein>
    <recommendedName>
        <fullName evidence="6">Protein THYLAKOID RHODANESE-LIKE, chloroplastic</fullName>
    </recommendedName>
</protein>
<keyword id="KW-0150">Chloroplast</keyword>
<keyword id="KW-0472">Membrane</keyword>
<keyword id="KW-0934">Plastid</keyword>
<keyword id="KW-1185">Reference proteome</keyword>
<keyword id="KW-0793">Thylakoid</keyword>
<keyword id="KW-0809">Transit peptide</keyword>
<keyword id="KW-0812">Transmembrane</keyword>
<keyword id="KW-1133">Transmembrane helix</keyword>
<feature type="transit peptide" description="Chloroplast" evidence="3">
    <location>
        <begin position="1"/>
        <end position="21"/>
    </location>
</feature>
<feature type="transit peptide" description="Thylakoid" evidence="2">
    <location>
        <begin position="22"/>
        <end position="58"/>
    </location>
</feature>
<feature type="chain" id="PRO_0000442383" description="Protein THYLAKOID RHODANESE-LIKE, chloroplastic" evidence="3">
    <location>
        <begin position="59"/>
        <end position="476"/>
    </location>
</feature>
<feature type="transmembrane region" description="Helical" evidence="3">
    <location>
        <begin position="100"/>
        <end position="120"/>
    </location>
</feature>
<feature type="transmembrane region" description="Helical" evidence="3">
    <location>
        <begin position="264"/>
        <end position="284"/>
    </location>
</feature>
<feature type="transmembrane region" description="Helical" evidence="3">
    <location>
        <begin position="287"/>
        <end position="307"/>
    </location>
</feature>
<feature type="domain" description="Rhodanese" evidence="4">
    <location>
        <begin position="140"/>
        <end position="246"/>
    </location>
</feature>
<feature type="region of interest" description="Disordered" evidence="5">
    <location>
        <begin position="1"/>
        <end position="29"/>
    </location>
</feature>
<feature type="region of interest" description="Disordered" evidence="5">
    <location>
        <begin position="342"/>
        <end position="476"/>
    </location>
</feature>
<feature type="compositionally biased region" description="Low complexity" evidence="5">
    <location>
        <begin position="11"/>
        <end position="21"/>
    </location>
</feature>
<feature type="compositionally biased region" description="Low complexity" evidence="5">
    <location>
        <begin position="351"/>
        <end position="389"/>
    </location>
</feature>
<feature type="compositionally biased region" description="Pro residues" evidence="5">
    <location>
        <begin position="403"/>
        <end position="412"/>
    </location>
</feature>
<feature type="compositionally biased region" description="Low complexity" evidence="5">
    <location>
        <begin position="425"/>
        <end position="446"/>
    </location>
</feature>
<feature type="compositionally biased region" description="Pro residues" evidence="5">
    <location>
        <begin position="447"/>
        <end position="476"/>
    </location>
</feature>
<reference key="1">
    <citation type="journal article" date="2005" name="PLoS Biol.">
        <title>The genomes of Oryza sativa: a history of duplications.</title>
        <authorList>
            <person name="Yu J."/>
            <person name="Wang J."/>
            <person name="Lin W."/>
            <person name="Li S."/>
            <person name="Li H."/>
            <person name="Zhou J."/>
            <person name="Ni P."/>
            <person name="Dong W."/>
            <person name="Hu S."/>
            <person name="Zeng C."/>
            <person name="Zhang J."/>
            <person name="Zhang Y."/>
            <person name="Li R."/>
            <person name="Xu Z."/>
            <person name="Li S."/>
            <person name="Li X."/>
            <person name="Zheng H."/>
            <person name="Cong L."/>
            <person name="Lin L."/>
            <person name="Yin J."/>
            <person name="Geng J."/>
            <person name="Li G."/>
            <person name="Shi J."/>
            <person name="Liu J."/>
            <person name="Lv H."/>
            <person name="Li J."/>
            <person name="Wang J."/>
            <person name="Deng Y."/>
            <person name="Ran L."/>
            <person name="Shi X."/>
            <person name="Wang X."/>
            <person name="Wu Q."/>
            <person name="Li C."/>
            <person name="Ren X."/>
            <person name="Wang J."/>
            <person name="Wang X."/>
            <person name="Li D."/>
            <person name="Liu D."/>
            <person name="Zhang X."/>
            <person name="Ji Z."/>
            <person name="Zhao W."/>
            <person name="Sun Y."/>
            <person name="Zhang Z."/>
            <person name="Bao J."/>
            <person name="Han Y."/>
            <person name="Dong L."/>
            <person name="Ji J."/>
            <person name="Chen P."/>
            <person name="Wu S."/>
            <person name="Liu J."/>
            <person name="Xiao Y."/>
            <person name="Bu D."/>
            <person name="Tan J."/>
            <person name="Yang L."/>
            <person name="Ye C."/>
            <person name="Zhang J."/>
            <person name="Xu J."/>
            <person name="Zhou Y."/>
            <person name="Yu Y."/>
            <person name="Zhang B."/>
            <person name="Zhuang S."/>
            <person name="Wei H."/>
            <person name="Liu B."/>
            <person name="Lei M."/>
            <person name="Yu H."/>
            <person name="Li Y."/>
            <person name="Xu H."/>
            <person name="Wei S."/>
            <person name="He X."/>
            <person name="Fang L."/>
            <person name="Zhang Z."/>
            <person name="Zhang Y."/>
            <person name="Huang X."/>
            <person name="Su Z."/>
            <person name="Tong W."/>
            <person name="Li J."/>
            <person name="Tong Z."/>
            <person name="Li S."/>
            <person name="Ye J."/>
            <person name="Wang L."/>
            <person name="Fang L."/>
            <person name="Lei T."/>
            <person name="Chen C.-S."/>
            <person name="Chen H.-C."/>
            <person name="Xu Z."/>
            <person name="Li H."/>
            <person name="Huang H."/>
            <person name="Zhang F."/>
            <person name="Xu H."/>
            <person name="Li N."/>
            <person name="Zhao C."/>
            <person name="Li S."/>
            <person name="Dong L."/>
            <person name="Huang Y."/>
            <person name="Li L."/>
            <person name="Xi Y."/>
            <person name="Qi Q."/>
            <person name="Li W."/>
            <person name="Zhang B."/>
            <person name="Hu W."/>
            <person name="Zhang Y."/>
            <person name="Tian X."/>
            <person name="Jiao Y."/>
            <person name="Liang X."/>
            <person name="Jin J."/>
            <person name="Gao L."/>
            <person name="Zheng W."/>
            <person name="Hao B."/>
            <person name="Liu S.-M."/>
            <person name="Wang W."/>
            <person name="Yuan L."/>
            <person name="Cao M."/>
            <person name="McDermott J."/>
            <person name="Samudrala R."/>
            <person name="Wang J."/>
            <person name="Wong G.K.-S."/>
            <person name="Yang H."/>
        </authorList>
    </citation>
    <scope>NUCLEOTIDE SEQUENCE [LARGE SCALE GENOMIC DNA]</scope>
    <source>
        <strain>cv. 93-11</strain>
    </source>
</reference>
<proteinExistence type="inferred from homology"/>
<name>TROL_ORYSI</name>